<proteinExistence type="inferred from homology"/>
<evidence type="ECO:0000255" key="1">
    <source>
        <dbReference type="HAMAP-Rule" id="MF_01220"/>
    </source>
</evidence>
<name>PYRH_CLOTE</name>
<comment type="function">
    <text evidence="1">Catalyzes the reversible phosphorylation of UMP to UDP.</text>
</comment>
<comment type="catalytic activity">
    <reaction evidence="1">
        <text>UMP + ATP = UDP + ADP</text>
        <dbReference type="Rhea" id="RHEA:24400"/>
        <dbReference type="ChEBI" id="CHEBI:30616"/>
        <dbReference type="ChEBI" id="CHEBI:57865"/>
        <dbReference type="ChEBI" id="CHEBI:58223"/>
        <dbReference type="ChEBI" id="CHEBI:456216"/>
        <dbReference type="EC" id="2.7.4.22"/>
    </reaction>
</comment>
<comment type="activity regulation">
    <text evidence="1">Allosterically activated by GTP. Inhibited by UTP.</text>
</comment>
<comment type="pathway">
    <text evidence="1">Pyrimidine metabolism; CTP biosynthesis via de novo pathway; UDP from UMP (UMPK route): step 1/1.</text>
</comment>
<comment type="subunit">
    <text evidence="1">Homohexamer.</text>
</comment>
<comment type="subcellular location">
    <subcellularLocation>
        <location evidence="1">Cytoplasm</location>
    </subcellularLocation>
</comment>
<comment type="similarity">
    <text evidence="1">Belongs to the UMP kinase family.</text>
</comment>
<feature type="chain" id="PRO_1000053916" description="Uridylate kinase">
    <location>
        <begin position="1"/>
        <end position="237"/>
    </location>
</feature>
<feature type="region of interest" description="Involved in allosteric activation by GTP" evidence="1">
    <location>
        <begin position="20"/>
        <end position="25"/>
    </location>
</feature>
<feature type="binding site" evidence="1">
    <location>
        <begin position="12"/>
        <end position="15"/>
    </location>
    <ligand>
        <name>ATP</name>
        <dbReference type="ChEBI" id="CHEBI:30616"/>
    </ligand>
</feature>
<feature type="binding site" evidence="1">
    <location>
        <position position="54"/>
    </location>
    <ligand>
        <name>UMP</name>
        <dbReference type="ChEBI" id="CHEBI:57865"/>
    </ligand>
</feature>
<feature type="binding site" evidence="1">
    <location>
        <position position="55"/>
    </location>
    <ligand>
        <name>ATP</name>
        <dbReference type="ChEBI" id="CHEBI:30616"/>
    </ligand>
</feature>
<feature type="binding site" evidence="1">
    <location>
        <position position="59"/>
    </location>
    <ligand>
        <name>ATP</name>
        <dbReference type="ChEBI" id="CHEBI:30616"/>
    </ligand>
</feature>
<feature type="binding site" evidence="1">
    <location>
        <position position="72"/>
    </location>
    <ligand>
        <name>UMP</name>
        <dbReference type="ChEBI" id="CHEBI:57865"/>
    </ligand>
</feature>
<feature type="binding site" evidence="1">
    <location>
        <begin position="133"/>
        <end position="140"/>
    </location>
    <ligand>
        <name>UMP</name>
        <dbReference type="ChEBI" id="CHEBI:57865"/>
    </ligand>
</feature>
<feature type="binding site" evidence="1">
    <location>
        <position position="166"/>
    </location>
    <ligand>
        <name>ATP</name>
        <dbReference type="ChEBI" id="CHEBI:30616"/>
    </ligand>
</feature>
<feature type="binding site" evidence="1">
    <location>
        <position position="169"/>
    </location>
    <ligand>
        <name>ATP</name>
        <dbReference type="ChEBI" id="CHEBI:30616"/>
    </ligand>
</feature>
<sequence>MNDIKYKRIMLKLSGEALAGENGYGLDFKVVKRISKEIKELVDMGVEIGAVVGGGNIWRGRNGEDMDRTTADYMGMLATCINAMALQDSLEQLGVDTRVQTAIEMKEVAEPFIRRRAMRHLEKGRVVIFAAGTGNPYFSTDTTAALRAAEIEADIILLAKKVDGVYDKDPHKHEKAQKFETLTYIDVLDQGLQVMDSTATSLCMDNNIPILVFALDAPGNIRKAISGEKIGTIVCKE</sequence>
<dbReference type="EC" id="2.7.4.22" evidence="1"/>
<dbReference type="EMBL" id="AE015927">
    <property type="protein sequence ID" value="AAO35830.1"/>
    <property type="molecule type" value="Genomic_DNA"/>
</dbReference>
<dbReference type="RefSeq" id="WP_011099492.1">
    <property type="nucleotide sequence ID" value="NC_004557.1"/>
</dbReference>
<dbReference type="SMR" id="Q895L0"/>
<dbReference type="STRING" id="212717.CTC_01263"/>
<dbReference type="GeneID" id="24253772"/>
<dbReference type="KEGG" id="ctc:CTC_01263"/>
<dbReference type="HOGENOM" id="CLU_033861_0_0_9"/>
<dbReference type="OrthoDB" id="9807458at2"/>
<dbReference type="UniPathway" id="UPA00159">
    <property type="reaction ID" value="UER00275"/>
</dbReference>
<dbReference type="Proteomes" id="UP000001412">
    <property type="component" value="Chromosome"/>
</dbReference>
<dbReference type="GO" id="GO:0005737">
    <property type="term" value="C:cytoplasm"/>
    <property type="evidence" value="ECO:0007669"/>
    <property type="project" value="UniProtKB-SubCell"/>
</dbReference>
<dbReference type="GO" id="GO:0005524">
    <property type="term" value="F:ATP binding"/>
    <property type="evidence" value="ECO:0007669"/>
    <property type="project" value="UniProtKB-KW"/>
</dbReference>
<dbReference type="GO" id="GO:0033862">
    <property type="term" value="F:UMP kinase activity"/>
    <property type="evidence" value="ECO:0007669"/>
    <property type="project" value="UniProtKB-EC"/>
</dbReference>
<dbReference type="GO" id="GO:0044210">
    <property type="term" value="P:'de novo' CTP biosynthetic process"/>
    <property type="evidence" value="ECO:0007669"/>
    <property type="project" value="UniProtKB-UniRule"/>
</dbReference>
<dbReference type="GO" id="GO:0006225">
    <property type="term" value="P:UDP biosynthetic process"/>
    <property type="evidence" value="ECO:0007669"/>
    <property type="project" value="TreeGrafter"/>
</dbReference>
<dbReference type="CDD" id="cd04254">
    <property type="entry name" value="AAK_UMPK-PyrH-Ec"/>
    <property type="match status" value="1"/>
</dbReference>
<dbReference type="FunFam" id="3.40.1160.10:FF:000001">
    <property type="entry name" value="Uridylate kinase"/>
    <property type="match status" value="1"/>
</dbReference>
<dbReference type="Gene3D" id="3.40.1160.10">
    <property type="entry name" value="Acetylglutamate kinase-like"/>
    <property type="match status" value="1"/>
</dbReference>
<dbReference type="HAMAP" id="MF_01220_B">
    <property type="entry name" value="PyrH_B"/>
    <property type="match status" value="1"/>
</dbReference>
<dbReference type="InterPro" id="IPR036393">
    <property type="entry name" value="AceGlu_kinase-like_sf"/>
</dbReference>
<dbReference type="InterPro" id="IPR001048">
    <property type="entry name" value="Asp/Glu/Uridylate_kinase"/>
</dbReference>
<dbReference type="InterPro" id="IPR001057">
    <property type="entry name" value="Glu/AcGlu_kinase"/>
</dbReference>
<dbReference type="InterPro" id="IPR011817">
    <property type="entry name" value="Uridylate_kinase"/>
</dbReference>
<dbReference type="InterPro" id="IPR015963">
    <property type="entry name" value="Uridylate_kinase_bac"/>
</dbReference>
<dbReference type="NCBIfam" id="TIGR02075">
    <property type="entry name" value="pyrH_bact"/>
    <property type="match status" value="1"/>
</dbReference>
<dbReference type="PANTHER" id="PTHR42833">
    <property type="entry name" value="URIDYLATE KINASE"/>
    <property type="match status" value="1"/>
</dbReference>
<dbReference type="PANTHER" id="PTHR42833:SF4">
    <property type="entry name" value="URIDYLATE KINASE PUMPKIN, CHLOROPLASTIC"/>
    <property type="match status" value="1"/>
</dbReference>
<dbReference type="Pfam" id="PF00696">
    <property type="entry name" value="AA_kinase"/>
    <property type="match status" value="1"/>
</dbReference>
<dbReference type="PIRSF" id="PIRSF005650">
    <property type="entry name" value="Uridylate_kin"/>
    <property type="match status" value="1"/>
</dbReference>
<dbReference type="PRINTS" id="PR00474">
    <property type="entry name" value="GLU5KINASE"/>
</dbReference>
<dbReference type="SUPFAM" id="SSF53633">
    <property type="entry name" value="Carbamate kinase-like"/>
    <property type="match status" value="1"/>
</dbReference>
<keyword id="KW-0021">Allosteric enzyme</keyword>
<keyword id="KW-0067">ATP-binding</keyword>
<keyword id="KW-0963">Cytoplasm</keyword>
<keyword id="KW-0418">Kinase</keyword>
<keyword id="KW-0547">Nucleotide-binding</keyword>
<keyword id="KW-0665">Pyrimidine biosynthesis</keyword>
<keyword id="KW-1185">Reference proteome</keyword>
<keyword id="KW-0808">Transferase</keyword>
<protein>
    <recommendedName>
        <fullName evidence="1">Uridylate kinase</fullName>
        <shortName evidence="1">UK</shortName>
        <ecNumber evidence="1">2.7.4.22</ecNumber>
    </recommendedName>
    <alternativeName>
        <fullName evidence="1">Uridine monophosphate kinase</fullName>
        <shortName evidence="1">UMP kinase</shortName>
        <shortName evidence="1">UMPK</shortName>
    </alternativeName>
</protein>
<reference key="1">
    <citation type="journal article" date="2003" name="Proc. Natl. Acad. Sci. U.S.A.">
        <title>The genome sequence of Clostridium tetani, the causative agent of tetanus disease.</title>
        <authorList>
            <person name="Brueggemann H."/>
            <person name="Baeumer S."/>
            <person name="Fricke W.F."/>
            <person name="Wiezer A."/>
            <person name="Liesegang H."/>
            <person name="Decker I."/>
            <person name="Herzberg C."/>
            <person name="Martinez-Arias R."/>
            <person name="Merkl R."/>
            <person name="Henne A."/>
            <person name="Gottschalk G."/>
        </authorList>
    </citation>
    <scope>NUCLEOTIDE SEQUENCE [LARGE SCALE GENOMIC DNA]</scope>
    <source>
        <strain>Massachusetts / E88</strain>
    </source>
</reference>
<gene>
    <name evidence="1" type="primary">pyrH</name>
    <name type="ordered locus">CTC_01263</name>
</gene>
<organism>
    <name type="scientific">Clostridium tetani (strain Massachusetts / E88)</name>
    <dbReference type="NCBI Taxonomy" id="212717"/>
    <lineage>
        <taxon>Bacteria</taxon>
        <taxon>Bacillati</taxon>
        <taxon>Bacillota</taxon>
        <taxon>Clostridia</taxon>
        <taxon>Eubacteriales</taxon>
        <taxon>Clostridiaceae</taxon>
        <taxon>Clostridium</taxon>
    </lineage>
</organism>
<accession>Q895L0</accession>